<sequence length="1137" mass="128680">MQWRGAGLWWPRRRQQQQQQQPPPPAFGPPAAAMVPPSRGVSPGLGGRPTSALLFLCYLNFVPSLGRQTSLTTSVLPRTEQSTTYADFIYFTAFEGSVRNVSEVSVEYLCSQPCVVHLEAVVSSEFRSSIPVYKKRWRNEKHLHTSRTQTVHVKFPSIMVYRDDYLIRHPISVSTVILRAWITHWHSGGGLNVRGEENLLHAVAKNYTLLQTVPPFERPFKDHQVCLEWNMDYLWSLWANRIPQCPLESDAVALLSFPYASSGENTGIVKKLQNFQNRELEATRSQRVDYPMVTISLWLYLLHYCEASLCGILYFVDSNEMYGTPSVFLTEDGSLHIQMHLVKGEDLAVKTKFTIPLKEWCRLDISFNGGQIVVTASIGWDLKSYHNQTISFHEDFYYNDTAGYFIIGGSRYVAGIEGFFGPVKYYRLRSLHPAQVLNPFLEKELAEQIKLYYERCTEVQDIISSYAATVQVGGERRETCDFHNSYLDLKRKYGRAEVCRGLPWEKELRDRHPSLFQSLLQMDLLTVPWNQNDSVLEIGARIFEKAVKRLSGVDGLHQISSAIPFLMDSSCCGYHKASYYLTVFYETGLNGPRDQLQGMLYSLVGGQGSERLSSMNLGYKHYQGVDSYPLDWELSYAYYSNIATKTPLDQHTLQGDQAYVETIRLKDDEILKVQTKEDGDVFMWLKHEATRGNAAAQQRLAQMLFWGQQGVAKNPEAAIEWYAKGALETEDPALIYDYAIVLFKGQGVKKNRRLALELMKKAASKGLHQAVNGLGWYYHKFRKNYAKAAKYWLKAEEMGNPDASYNLGVLYLDGIFPGVPGRNLTLAGEYFHKAAQGGHIEGTLWCSLYYITGNLETFPRDPEKAVVWAKHVAEKNGYLGHVIRKGLNAYLEGLWHEALLYYVLAAETGIEVSQTNLAHICEERPDLAGRYLGVNCVWRYYNFSVFQIDAPSFAYLKMGDLYYYGHQNQSQDLELSVQMYAQAALDGDSQGFFNLAALIEEGAVIPHHILEFLEIDPSLHSSNTSILQELYERCWSLSNEESLSPCSLAWLYLHLRLLWGAVLHSALIYFLGTFLLSVVIAWMVLYLQYISASGSSPAPAWVSADPTSSTPSPAVPPAADASDHDPPMMANGPEPRG</sequence>
<keyword id="KW-0025">Alternative splicing</keyword>
<keyword id="KW-0325">Glycoprotein</keyword>
<keyword id="KW-0472">Membrane</keyword>
<keyword id="KW-0597">Phosphoprotein</keyword>
<keyword id="KW-1185">Reference proteome</keyword>
<keyword id="KW-0677">Repeat</keyword>
<keyword id="KW-0812">Transmembrane</keyword>
<keyword id="KW-1133">Transmembrane helix</keyword>
<comment type="subcellular location">
    <subcellularLocation>
        <location evidence="6">Membrane</location>
        <topology evidence="6">Single-pass membrane protein</topology>
    </subcellularLocation>
</comment>
<comment type="alternative products">
    <event type="alternative splicing"/>
    <isoform>
        <id>Q80TS8-1</id>
        <name>1</name>
        <sequence type="displayed"/>
    </isoform>
    <isoform>
        <id>Q80TS8-2</id>
        <name>2</name>
        <sequence type="described" ref="VSP_031813"/>
    </isoform>
    <isoform>
        <id>Q80TS8-3</id>
        <name>3</name>
        <sequence type="described" ref="VSP_031814 VSP_031815"/>
    </isoform>
</comment>
<comment type="sequence caution" evidence="6">
    <conflict type="erroneous initiation">
        <sequence resource="EMBL-CDS" id="AAH26655"/>
    </conflict>
    <text>Extended N-terminus.</text>
</comment>
<comment type="sequence caution" evidence="6">
    <conflict type="erroneous initiation">
        <sequence resource="EMBL-CDS" id="BAC65644"/>
    </conflict>
    <text>Extended N-terminus.</text>
</comment>
<proteinExistence type="evidence at transcript level"/>
<evidence type="ECO:0000250" key="1">
    <source>
        <dbReference type="UniProtKB" id="Q68CR1"/>
    </source>
</evidence>
<evidence type="ECO:0000255" key="2"/>
<evidence type="ECO:0000256" key="3">
    <source>
        <dbReference type="SAM" id="MobiDB-lite"/>
    </source>
</evidence>
<evidence type="ECO:0000303" key="4">
    <source>
    </source>
</evidence>
<evidence type="ECO:0000303" key="5">
    <source>
    </source>
</evidence>
<evidence type="ECO:0000305" key="6"/>
<dbReference type="EMBL" id="AK122362">
    <property type="protein sequence ID" value="BAC65644.1"/>
    <property type="status" value="ALT_INIT"/>
    <property type="molecule type" value="mRNA"/>
</dbReference>
<dbReference type="EMBL" id="AK030487">
    <property type="protein sequence ID" value="BAC26986.1"/>
    <property type="molecule type" value="mRNA"/>
</dbReference>
<dbReference type="EMBL" id="AK037220">
    <property type="protein sequence ID" value="BAC29759.1"/>
    <property type="molecule type" value="mRNA"/>
</dbReference>
<dbReference type="EMBL" id="AC122522">
    <property type="status" value="NOT_ANNOTATED_CDS"/>
    <property type="molecule type" value="Genomic_DNA"/>
</dbReference>
<dbReference type="EMBL" id="AC132083">
    <property type="status" value="NOT_ANNOTATED_CDS"/>
    <property type="molecule type" value="Genomic_DNA"/>
</dbReference>
<dbReference type="EMBL" id="BC026655">
    <property type="protein sequence ID" value="AAH26655.1"/>
    <property type="status" value="ALT_INIT"/>
    <property type="molecule type" value="mRNA"/>
</dbReference>
<dbReference type="EMBL" id="BC094607">
    <property type="protein sequence ID" value="AAH94607.1"/>
    <property type="molecule type" value="mRNA"/>
</dbReference>
<dbReference type="EMBL" id="BC117915">
    <property type="protein sequence ID" value="AAI17916.1"/>
    <property type="molecule type" value="mRNA"/>
</dbReference>
<dbReference type="EMBL" id="BC117916">
    <property type="protein sequence ID" value="AAI17917.1"/>
    <property type="molecule type" value="mRNA"/>
</dbReference>
<dbReference type="CCDS" id="CCDS51501.1">
    <molecule id="Q80TS8-1"/>
</dbReference>
<dbReference type="RefSeq" id="NP_766298.2">
    <molecule id="Q80TS8-1"/>
    <property type="nucleotide sequence ID" value="NM_172710.3"/>
</dbReference>
<dbReference type="RefSeq" id="XP_011239032.1">
    <molecule id="Q80TS8-2"/>
    <property type="nucleotide sequence ID" value="XM_011240730.2"/>
</dbReference>
<dbReference type="SMR" id="Q80TS8"/>
<dbReference type="FunCoup" id="Q80TS8">
    <property type="interactions" value="162"/>
</dbReference>
<dbReference type="STRING" id="10090.ENSMUSP00000031090"/>
<dbReference type="GlyCosmos" id="Q80TS8">
    <property type="glycosylation" value="3 sites, No reported glycans"/>
</dbReference>
<dbReference type="GlyGen" id="Q80TS8">
    <property type="glycosylation" value="6 sites, 3 N-linked glycans (3 sites)"/>
</dbReference>
<dbReference type="iPTMnet" id="Q80TS8"/>
<dbReference type="PhosphoSitePlus" id="Q80TS8"/>
<dbReference type="PaxDb" id="10090-ENSMUSP00000031090"/>
<dbReference type="PeptideAtlas" id="Q80TS8"/>
<dbReference type="ProteomicsDB" id="256762">
    <molecule id="Q80TS8-1"/>
</dbReference>
<dbReference type="ProteomicsDB" id="256763">
    <molecule id="Q80TS8-2"/>
</dbReference>
<dbReference type="ProteomicsDB" id="256764">
    <molecule id="Q80TS8-3"/>
</dbReference>
<dbReference type="Antibodypedia" id="51970">
    <property type="antibodies" value="67 antibodies from 15 providers"/>
</dbReference>
<dbReference type="Ensembl" id="ENSMUST00000031090.8">
    <molecule id="Q80TS8-1"/>
    <property type="protein sequence ID" value="ENSMUSP00000031090.7"/>
    <property type="gene ID" value="ENSMUSG00000029189.11"/>
</dbReference>
<dbReference type="GeneID" id="231238"/>
<dbReference type="KEGG" id="mmu:231238"/>
<dbReference type="UCSC" id="uc008xlc.1">
    <molecule id="Q80TS8-1"/>
    <property type="organism name" value="mouse"/>
</dbReference>
<dbReference type="UCSC" id="uc008xld.1">
    <molecule id="Q80TS8-3"/>
    <property type="organism name" value="mouse"/>
</dbReference>
<dbReference type="AGR" id="MGI:1916941"/>
<dbReference type="CTD" id="23231"/>
<dbReference type="MGI" id="MGI:1916941">
    <property type="gene designation" value="Sel1l3"/>
</dbReference>
<dbReference type="VEuPathDB" id="HostDB:ENSMUSG00000029189"/>
<dbReference type="eggNOG" id="KOG1550">
    <property type="taxonomic scope" value="Eukaryota"/>
</dbReference>
<dbReference type="GeneTree" id="ENSGT00940000159983"/>
<dbReference type="HOGENOM" id="CLU_011209_0_0_1"/>
<dbReference type="InParanoid" id="Q80TS8"/>
<dbReference type="OMA" id="HAGYKHT"/>
<dbReference type="OrthoDB" id="272077at2759"/>
<dbReference type="PhylomeDB" id="Q80TS8"/>
<dbReference type="TreeFam" id="TF315257"/>
<dbReference type="BioGRID-ORCS" id="231238">
    <property type="hits" value="0 hits in 81 CRISPR screens"/>
</dbReference>
<dbReference type="ChiTaRS" id="Sel1l3">
    <property type="organism name" value="mouse"/>
</dbReference>
<dbReference type="PRO" id="PR:Q80TS8"/>
<dbReference type="Proteomes" id="UP000000589">
    <property type="component" value="Chromosome 5"/>
</dbReference>
<dbReference type="RNAct" id="Q80TS8">
    <property type="molecule type" value="protein"/>
</dbReference>
<dbReference type="Bgee" id="ENSMUSG00000029189">
    <property type="expression patterns" value="Expressed in lacrimal gland and 225 other cell types or tissues"/>
</dbReference>
<dbReference type="GO" id="GO:0016020">
    <property type="term" value="C:membrane"/>
    <property type="evidence" value="ECO:0007669"/>
    <property type="project" value="UniProtKB-SubCell"/>
</dbReference>
<dbReference type="FunFam" id="1.25.40.10:FF:000129">
    <property type="entry name" value="protein sel-1 homolog 3 isoform X1"/>
    <property type="match status" value="1"/>
</dbReference>
<dbReference type="FunFam" id="1.25.40.10:FF:000171">
    <property type="entry name" value="protein sel-1 homolog 3 isoform X1"/>
    <property type="match status" value="1"/>
</dbReference>
<dbReference type="Gene3D" id="1.25.40.10">
    <property type="entry name" value="Tetratricopeptide repeat domain"/>
    <property type="match status" value="3"/>
</dbReference>
<dbReference type="InterPro" id="IPR042756">
    <property type="entry name" value="Sel-1L3"/>
</dbReference>
<dbReference type="InterPro" id="IPR006597">
    <property type="entry name" value="Sel1-like"/>
</dbReference>
<dbReference type="InterPro" id="IPR011990">
    <property type="entry name" value="TPR-like_helical_dom_sf"/>
</dbReference>
<dbReference type="PANTHER" id="PTHR44444">
    <property type="entry name" value="PROTEIN SEL-1 HOMOLOG 3"/>
    <property type="match status" value="1"/>
</dbReference>
<dbReference type="PANTHER" id="PTHR44444:SF1">
    <property type="entry name" value="PROTEIN SEL-1 HOMOLOG 3"/>
    <property type="match status" value="1"/>
</dbReference>
<dbReference type="Pfam" id="PF08238">
    <property type="entry name" value="Sel1"/>
    <property type="match status" value="5"/>
</dbReference>
<dbReference type="SMART" id="SM00671">
    <property type="entry name" value="SEL1"/>
    <property type="match status" value="8"/>
</dbReference>
<dbReference type="SUPFAM" id="SSF81901">
    <property type="entry name" value="HCP-like"/>
    <property type="match status" value="2"/>
</dbReference>
<feature type="chain" id="PRO_0000321895" description="Protein sel-1 homolog 3">
    <location>
        <begin position="1"/>
        <end position="1137"/>
    </location>
</feature>
<feature type="transmembrane region" description="Helical" evidence="2">
    <location>
        <begin position="1067"/>
        <end position="1087"/>
    </location>
</feature>
<feature type="repeat" description="Sel1-like 1">
    <location>
        <begin position="575"/>
        <end position="609"/>
    </location>
</feature>
<feature type="repeat" description="Sel1-like 2">
    <location>
        <begin position="611"/>
        <end position="647"/>
    </location>
</feature>
<feature type="repeat" description="Sel1-like 3">
    <location>
        <begin position="694"/>
        <end position="730"/>
    </location>
</feature>
<feature type="repeat" description="Sel1-like 4">
    <location>
        <begin position="732"/>
        <end position="767"/>
    </location>
</feature>
<feature type="repeat" description="Sel1-like 5">
    <location>
        <begin position="768"/>
        <end position="800"/>
    </location>
</feature>
<feature type="repeat" description="Sel1-like 6">
    <location>
        <begin position="801"/>
        <end position="839"/>
    </location>
</feature>
<feature type="repeat" description="Sel1-like 7">
    <location>
        <begin position="840"/>
        <end position="877"/>
    </location>
</feature>
<feature type="repeat" description="Sel1-like 8">
    <location>
        <begin position="952"/>
        <end position="988"/>
    </location>
</feature>
<feature type="region of interest" description="Disordered" evidence="3">
    <location>
        <begin position="1"/>
        <end position="42"/>
    </location>
</feature>
<feature type="region of interest" description="Disordered" evidence="3">
    <location>
        <begin position="1100"/>
        <end position="1137"/>
    </location>
</feature>
<feature type="compositionally biased region" description="Low complexity" evidence="3">
    <location>
        <begin position="1102"/>
        <end position="1120"/>
    </location>
</feature>
<feature type="modified residue" description="Phosphoserine" evidence="1">
    <location>
        <position position="613"/>
    </location>
</feature>
<feature type="glycosylation site" description="N-linked (GlcNAc...) asparagine" evidence="2">
    <location>
        <position position="206"/>
    </location>
</feature>
<feature type="glycosylation site" description="N-linked (GlcNAc...) asparagine" evidence="2">
    <location>
        <position position="387"/>
    </location>
</feature>
<feature type="glycosylation site" description="N-linked (GlcNAc...) asparagine" evidence="2">
    <location>
        <position position="942"/>
    </location>
</feature>
<feature type="splice variant" id="VSP_031813" description="In isoform 2." evidence="4 5">
    <location>
        <begin position="1"/>
        <end position="158"/>
    </location>
</feature>
<feature type="splice variant" id="VSP_031814" description="In isoform 3." evidence="5">
    <original>QRLAQMLFWGQQGVAKNPEAAIEWYAKG</original>
    <variation>VRASPSWSICQSFQMRLQSNKASPSSAA</variation>
    <location>
        <begin position="698"/>
        <end position="725"/>
    </location>
</feature>
<feature type="splice variant" id="VSP_031815" description="In isoform 3." evidence="5">
    <location>
        <begin position="726"/>
        <end position="1137"/>
    </location>
</feature>
<feature type="sequence conflict" description="In Ref. 1; BAC65644 and 4; AAI17916/AAI17917." evidence="6" ref="1 4">
    <original>V</original>
    <variation>M</variation>
    <location>
        <position position="413"/>
    </location>
</feature>
<feature type="sequence conflict" description="In Ref. 4; AAH94607." evidence="6" ref="4">
    <original>H</original>
    <variation>Y</variation>
    <location>
        <position position="768"/>
    </location>
</feature>
<feature type="sequence conflict" description="In Ref. 4; AAH94607." evidence="6" ref="4">
    <original>E</original>
    <variation>D</variation>
    <location>
        <position position="974"/>
    </location>
</feature>
<reference key="1">
    <citation type="journal article" date="2003" name="DNA Res.">
        <title>Prediction of the coding sequences of mouse homologues of KIAA gene: II. The complete nucleotide sequences of 400 mouse KIAA-homologous cDNAs identified by screening of terminal sequences of cDNA clones randomly sampled from size-fractionated libraries.</title>
        <authorList>
            <person name="Okazaki N."/>
            <person name="Kikuno R."/>
            <person name="Ohara R."/>
            <person name="Inamoto S."/>
            <person name="Aizawa H."/>
            <person name="Yuasa S."/>
            <person name="Nakajima D."/>
            <person name="Nagase T."/>
            <person name="Ohara O."/>
            <person name="Koga H."/>
        </authorList>
    </citation>
    <scope>NUCLEOTIDE SEQUENCE [LARGE SCALE MRNA] (ISOFORM 1)</scope>
    <source>
        <tissue>Brain</tissue>
    </source>
</reference>
<reference key="2">
    <citation type="journal article" date="2005" name="Science">
        <title>The transcriptional landscape of the mammalian genome.</title>
        <authorList>
            <person name="Carninci P."/>
            <person name="Kasukawa T."/>
            <person name="Katayama S."/>
            <person name="Gough J."/>
            <person name="Frith M.C."/>
            <person name="Maeda N."/>
            <person name="Oyama R."/>
            <person name="Ravasi T."/>
            <person name="Lenhard B."/>
            <person name="Wells C."/>
            <person name="Kodzius R."/>
            <person name="Shimokawa K."/>
            <person name="Bajic V.B."/>
            <person name="Brenner S.E."/>
            <person name="Batalov S."/>
            <person name="Forrest A.R."/>
            <person name="Zavolan M."/>
            <person name="Davis M.J."/>
            <person name="Wilming L.G."/>
            <person name="Aidinis V."/>
            <person name="Allen J.E."/>
            <person name="Ambesi-Impiombato A."/>
            <person name="Apweiler R."/>
            <person name="Aturaliya R.N."/>
            <person name="Bailey T.L."/>
            <person name="Bansal M."/>
            <person name="Baxter L."/>
            <person name="Beisel K.W."/>
            <person name="Bersano T."/>
            <person name="Bono H."/>
            <person name="Chalk A.M."/>
            <person name="Chiu K.P."/>
            <person name="Choudhary V."/>
            <person name="Christoffels A."/>
            <person name="Clutterbuck D.R."/>
            <person name="Crowe M.L."/>
            <person name="Dalla E."/>
            <person name="Dalrymple B.P."/>
            <person name="de Bono B."/>
            <person name="Della Gatta G."/>
            <person name="di Bernardo D."/>
            <person name="Down T."/>
            <person name="Engstrom P."/>
            <person name="Fagiolini M."/>
            <person name="Faulkner G."/>
            <person name="Fletcher C.F."/>
            <person name="Fukushima T."/>
            <person name="Furuno M."/>
            <person name="Futaki S."/>
            <person name="Gariboldi M."/>
            <person name="Georgii-Hemming P."/>
            <person name="Gingeras T.R."/>
            <person name="Gojobori T."/>
            <person name="Green R.E."/>
            <person name="Gustincich S."/>
            <person name="Harbers M."/>
            <person name="Hayashi Y."/>
            <person name="Hensch T.K."/>
            <person name="Hirokawa N."/>
            <person name="Hill D."/>
            <person name="Huminiecki L."/>
            <person name="Iacono M."/>
            <person name="Ikeo K."/>
            <person name="Iwama A."/>
            <person name="Ishikawa T."/>
            <person name="Jakt M."/>
            <person name="Kanapin A."/>
            <person name="Katoh M."/>
            <person name="Kawasawa Y."/>
            <person name="Kelso J."/>
            <person name="Kitamura H."/>
            <person name="Kitano H."/>
            <person name="Kollias G."/>
            <person name="Krishnan S.P."/>
            <person name="Kruger A."/>
            <person name="Kummerfeld S.K."/>
            <person name="Kurochkin I.V."/>
            <person name="Lareau L.F."/>
            <person name="Lazarevic D."/>
            <person name="Lipovich L."/>
            <person name="Liu J."/>
            <person name="Liuni S."/>
            <person name="McWilliam S."/>
            <person name="Madan Babu M."/>
            <person name="Madera M."/>
            <person name="Marchionni L."/>
            <person name="Matsuda H."/>
            <person name="Matsuzawa S."/>
            <person name="Miki H."/>
            <person name="Mignone F."/>
            <person name="Miyake S."/>
            <person name="Morris K."/>
            <person name="Mottagui-Tabar S."/>
            <person name="Mulder N."/>
            <person name="Nakano N."/>
            <person name="Nakauchi H."/>
            <person name="Ng P."/>
            <person name="Nilsson R."/>
            <person name="Nishiguchi S."/>
            <person name="Nishikawa S."/>
            <person name="Nori F."/>
            <person name="Ohara O."/>
            <person name="Okazaki Y."/>
            <person name="Orlando V."/>
            <person name="Pang K.C."/>
            <person name="Pavan W.J."/>
            <person name="Pavesi G."/>
            <person name="Pesole G."/>
            <person name="Petrovsky N."/>
            <person name="Piazza S."/>
            <person name="Reed J."/>
            <person name="Reid J.F."/>
            <person name="Ring B.Z."/>
            <person name="Ringwald M."/>
            <person name="Rost B."/>
            <person name="Ruan Y."/>
            <person name="Salzberg S.L."/>
            <person name="Sandelin A."/>
            <person name="Schneider C."/>
            <person name="Schoenbach C."/>
            <person name="Sekiguchi K."/>
            <person name="Semple C.A."/>
            <person name="Seno S."/>
            <person name="Sessa L."/>
            <person name="Sheng Y."/>
            <person name="Shibata Y."/>
            <person name="Shimada H."/>
            <person name="Shimada K."/>
            <person name="Silva D."/>
            <person name="Sinclair B."/>
            <person name="Sperling S."/>
            <person name="Stupka E."/>
            <person name="Sugiura K."/>
            <person name="Sultana R."/>
            <person name="Takenaka Y."/>
            <person name="Taki K."/>
            <person name="Tammoja K."/>
            <person name="Tan S.L."/>
            <person name="Tang S."/>
            <person name="Taylor M.S."/>
            <person name="Tegner J."/>
            <person name="Teichmann S.A."/>
            <person name="Ueda H.R."/>
            <person name="van Nimwegen E."/>
            <person name="Verardo R."/>
            <person name="Wei C.L."/>
            <person name="Yagi K."/>
            <person name="Yamanishi H."/>
            <person name="Zabarovsky E."/>
            <person name="Zhu S."/>
            <person name="Zimmer A."/>
            <person name="Hide W."/>
            <person name="Bult C."/>
            <person name="Grimmond S.M."/>
            <person name="Teasdale R.D."/>
            <person name="Liu E.T."/>
            <person name="Brusic V."/>
            <person name="Quackenbush J."/>
            <person name="Wahlestedt C."/>
            <person name="Mattick J.S."/>
            <person name="Hume D.A."/>
            <person name="Kai C."/>
            <person name="Sasaki D."/>
            <person name="Tomaru Y."/>
            <person name="Fukuda S."/>
            <person name="Kanamori-Katayama M."/>
            <person name="Suzuki M."/>
            <person name="Aoki J."/>
            <person name="Arakawa T."/>
            <person name="Iida J."/>
            <person name="Imamura K."/>
            <person name="Itoh M."/>
            <person name="Kato T."/>
            <person name="Kawaji H."/>
            <person name="Kawagashira N."/>
            <person name="Kawashima T."/>
            <person name="Kojima M."/>
            <person name="Kondo S."/>
            <person name="Konno H."/>
            <person name="Nakano K."/>
            <person name="Ninomiya N."/>
            <person name="Nishio T."/>
            <person name="Okada M."/>
            <person name="Plessy C."/>
            <person name="Shibata K."/>
            <person name="Shiraki T."/>
            <person name="Suzuki S."/>
            <person name="Tagami M."/>
            <person name="Waki K."/>
            <person name="Watahiki A."/>
            <person name="Okamura-Oho Y."/>
            <person name="Suzuki H."/>
            <person name="Kawai J."/>
            <person name="Hayashizaki Y."/>
        </authorList>
    </citation>
    <scope>NUCLEOTIDE SEQUENCE [LARGE SCALE MRNA] (ISOFORMS 2 AND 3)</scope>
    <source>
        <strain>C57BL/6J</strain>
        <tissue>Pituitary</tissue>
        <tissue>Skin</tissue>
    </source>
</reference>
<reference key="3">
    <citation type="journal article" date="2009" name="PLoS Biol.">
        <title>Lineage-specific biology revealed by a finished genome assembly of the mouse.</title>
        <authorList>
            <person name="Church D.M."/>
            <person name="Goodstadt L."/>
            <person name="Hillier L.W."/>
            <person name="Zody M.C."/>
            <person name="Goldstein S."/>
            <person name="She X."/>
            <person name="Bult C.J."/>
            <person name="Agarwala R."/>
            <person name="Cherry J.L."/>
            <person name="DiCuccio M."/>
            <person name="Hlavina W."/>
            <person name="Kapustin Y."/>
            <person name="Meric P."/>
            <person name="Maglott D."/>
            <person name="Birtle Z."/>
            <person name="Marques A.C."/>
            <person name="Graves T."/>
            <person name="Zhou S."/>
            <person name="Teague B."/>
            <person name="Potamousis K."/>
            <person name="Churas C."/>
            <person name="Place M."/>
            <person name="Herschleb J."/>
            <person name="Runnheim R."/>
            <person name="Forrest D."/>
            <person name="Amos-Landgraf J."/>
            <person name="Schwartz D.C."/>
            <person name="Cheng Z."/>
            <person name="Lindblad-Toh K."/>
            <person name="Eichler E.E."/>
            <person name="Ponting C.P."/>
        </authorList>
    </citation>
    <scope>NUCLEOTIDE SEQUENCE [LARGE SCALE GENOMIC DNA]</scope>
    <source>
        <strain>C57BL/6J</strain>
    </source>
</reference>
<reference key="4">
    <citation type="journal article" date="2004" name="Genome Res.">
        <title>The status, quality, and expansion of the NIH full-length cDNA project: the Mammalian Gene Collection (MGC).</title>
        <authorList>
            <consortium name="The MGC Project Team"/>
        </authorList>
    </citation>
    <scope>NUCLEOTIDE SEQUENCE [LARGE SCALE MRNA] (ISOFORM 2)</scope>
    <scope>NUCLEOTIDE SEQUENCE [LARGE SCALE MRNA] OF 720-1137</scope>
    <source>
        <strain>C57BL/6J</strain>
        <strain>FVB/N</strain>
        <tissue>Brain</tissue>
        <tissue>Colon</tissue>
    </source>
</reference>
<accession>Q80TS8</accession>
<accession>E9QPJ6</accession>
<accession>Q148Y5</accession>
<accession>Q505D2</accession>
<accession>Q8BMN0</accession>
<accession>Q8BYY3</accession>
<accession>Q8R0K7</accession>
<gene>
    <name type="primary">Sel1l3</name>
    <name type="synonym">Kiaa0746</name>
</gene>
<protein>
    <recommendedName>
        <fullName>Protein sel-1 homolog 3</fullName>
    </recommendedName>
    <alternativeName>
        <fullName>Suppressor of lin-12-like protein 3</fullName>
        <shortName>Sel-1L3</shortName>
    </alternativeName>
</protein>
<organism>
    <name type="scientific">Mus musculus</name>
    <name type="common">Mouse</name>
    <dbReference type="NCBI Taxonomy" id="10090"/>
    <lineage>
        <taxon>Eukaryota</taxon>
        <taxon>Metazoa</taxon>
        <taxon>Chordata</taxon>
        <taxon>Craniata</taxon>
        <taxon>Vertebrata</taxon>
        <taxon>Euteleostomi</taxon>
        <taxon>Mammalia</taxon>
        <taxon>Eutheria</taxon>
        <taxon>Euarchontoglires</taxon>
        <taxon>Glires</taxon>
        <taxon>Rodentia</taxon>
        <taxon>Myomorpha</taxon>
        <taxon>Muroidea</taxon>
        <taxon>Muridae</taxon>
        <taxon>Murinae</taxon>
        <taxon>Mus</taxon>
        <taxon>Mus</taxon>
    </lineage>
</organism>
<name>SE1L3_MOUSE</name>